<keyword id="KW-0131">Cell cycle</keyword>
<keyword id="KW-0132">Cell division</keyword>
<keyword id="KW-0997">Cell inner membrane</keyword>
<keyword id="KW-1003">Cell membrane</keyword>
<keyword id="KW-0472">Membrane</keyword>
<keyword id="KW-1185">Reference proteome</keyword>
<keyword id="KW-0812">Transmembrane</keyword>
<keyword id="KW-1133">Transmembrane helix</keyword>
<gene>
    <name evidence="1" type="primary">zipA</name>
    <name type="ordered locus">c2946</name>
</gene>
<feature type="chain" id="PRO_0000214522" description="Cell division protein ZipA">
    <location>
        <begin position="1"/>
        <end position="332"/>
    </location>
</feature>
<feature type="topological domain" description="Periplasmic" evidence="1">
    <location>
        <begin position="1"/>
        <end position="6"/>
    </location>
</feature>
<feature type="transmembrane region" description="Helical" evidence="1">
    <location>
        <begin position="7"/>
        <end position="27"/>
    </location>
</feature>
<feature type="topological domain" description="Cytoplasmic" evidence="1">
    <location>
        <begin position="28"/>
        <end position="332"/>
    </location>
</feature>
<feature type="region of interest" description="Disordered" evidence="2">
    <location>
        <begin position="42"/>
        <end position="190"/>
    </location>
</feature>
<feature type="compositionally biased region" description="Acidic residues" evidence="2">
    <location>
        <begin position="51"/>
        <end position="63"/>
    </location>
</feature>
<feature type="compositionally biased region" description="Low complexity" evidence="2">
    <location>
        <begin position="99"/>
        <end position="115"/>
    </location>
</feature>
<feature type="compositionally biased region" description="Low complexity" evidence="2">
    <location>
        <begin position="123"/>
        <end position="150"/>
    </location>
</feature>
<feature type="compositionally biased region" description="Low complexity" evidence="2">
    <location>
        <begin position="160"/>
        <end position="175"/>
    </location>
</feature>
<proteinExistence type="inferred from homology"/>
<sequence length="332" mass="36967">MMQDLRLILIIVGAIAIIALLVHGFWTSRKERSSMFRDRPLKRMKSKRDDDSYDEDVEDDEGVGEVRVHRVNHAPANAQEHEAARPSPQHQYQPPYASAQPRQPVQQPPEAQVPPQHAPRPTQPVQQPVQQPAYQPQPEQPLQQPVSPQVASAPQPVHSAPQPAQQAFQPAEPVAAPQPEPVAEPAPVMDKPKRKEAVIIMNVAAHHGSELNGELLLNSIQQAGFIFGDMNIYHRHLSPDGSGPALFSLANMVKPGTFDPEMKDFTTPGVTIFMQVPSYGDELQNFKLMLQSAQHIADEVGGVVLDDQRRMMTPQKLREYQDIIREVKDANA</sequence>
<reference key="1">
    <citation type="journal article" date="2002" name="Proc. Natl. Acad. Sci. U.S.A.">
        <title>Extensive mosaic structure revealed by the complete genome sequence of uropathogenic Escherichia coli.</title>
        <authorList>
            <person name="Welch R.A."/>
            <person name="Burland V."/>
            <person name="Plunkett G. III"/>
            <person name="Redford P."/>
            <person name="Roesch P."/>
            <person name="Rasko D."/>
            <person name="Buckles E.L."/>
            <person name="Liou S.-R."/>
            <person name="Boutin A."/>
            <person name="Hackett J."/>
            <person name="Stroud D."/>
            <person name="Mayhew G.F."/>
            <person name="Rose D.J."/>
            <person name="Zhou S."/>
            <person name="Schwartz D.C."/>
            <person name="Perna N.T."/>
            <person name="Mobley H.L.T."/>
            <person name="Donnenberg M.S."/>
            <person name="Blattner F.R."/>
        </authorList>
    </citation>
    <scope>NUCLEOTIDE SEQUENCE [LARGE SCALE GENOMIC DNA]</scope>
    <source>
        <strain>CFT073 / ATCC 700928 / UPEC</strain>
    </source>
</reference>
<comment type="function">
    <text evidence="1">Essential cell division protein that stabilizes the FtsZ protofilaments by cross-linking them and that serves as a cytoplasmic membrane anchor for the Z ring. Also required for the recruitment to the septal ring of downstream cell division proteins.</text>
</comment>
<comment type="subunit">
    <text evidence="1">Interacts with FtsZ via their C-terminal domains.</text>
</comment>
<comment type="subcellular location">
    <subcellularLocation>
        <location evidence="1">Cell inner membrane</location>
        <topology evidence="1">Single-pass type I membrane protein</topology>
    </subcellularLocation>
    <text evidence="1">Localizes to the Z ring in an FtsZ-dependent manner.</text>
</comment>
<comment type="similarity">
    <text evidence="1">Belongs to the ZipA family.</text>
</comment>
<comment type="sequence caution" evidence="3">
    <conflict type="erroneous initiation">
        <sequence resource="EMBL-CDS" id="AAN81396"/>
    </conflict>
</comment>
<accession>Q8FFC0</accession>
<name>ZIPA_ECOL6</name>
<protein>
    <recommendedName>
        <fullName evidence="1">Cell division protein ZipA</fullName>
    </recommendedName>
</protein>
<evidence type="ECO:0000255" key="1">
    <source>
        <dbReference type="HAMAP-Rule" id="MF_00509"/>
    </source>
</evidence>
<evidence type="ECO:0000256" key="2">
    <source>
        <dbReference type="SAM" id="MobiDB-lite"/>
    </source>
</evidence>
<evidence type="ECO:0000305" key="3"/>
<dbReference type="EMBL" id="AE014075">
    <property type="protein sequence ID" value="AAN81396.1"/>
    <property type="status" value="ALT_INIT"/>
    <property type="molecule type" value="Genomic_DNA"/>
</dbReference>
<dbReference type="RefSeq" id="WP_001305210.1">
    <property type="nucleotide sequence ID" value="NZ_CP051263.1"/>
</dbReference>
<dbReference type="SMR" id="Q8FFC0"/>
<dbReference type="STRING" id="199310.c2946"/>
<dbReference type="KEGG" id="ecc:c2946"/>
<dbReference type="eggNOG" id="COG3115">
    <property type="taxonomic scope" value="Bacteria"/>
</dbReference>
<dbReference type="HOGENOM" id="CLU_030174_1_0_6"/>
<dbReference type="Proteomes" id="UP000001410">
    <property type="component" value="Chromosome"/>
</dbReference>
<dbReference type="GO" id="GO:0032153">
    <property type="term" value="C:cell division site"/>
    <property type="evidence" value="ECO:0007669"/>
    <property type="project" value="UniProtKB-UniRule"/>
</dbReference>
<dbReference type="GO" id="GO:0005886">
    <property type="term" value="C:plasma membrane"/>
    <property type="evidence" value="ECO:0007669"/>
    <property type="project" value="UniProtKB-SubCell"/>
</dbReference>
<dbReference type="GO" id="GO:0000917">
    <property type="term" value="P:division septum assembly"/>
    <property type="evidence" value="ECO:0007669"/>
    <property type="project" value="TreeGrafter"/>
</dbReference>
<dbReference type="GO" id="GO:0043093">
    <property type="term" value="P:FtsZ-dependent cytokinesis"/>
    <property type="evidence" value="ECO:0007669"/>
    <property type="project" value="UniProtKB-UniRule"/>
</dbReference>
<dbReference type="CDD" id="cd00231">
    <property type="entry name" value="ZipA"/>
    <property type="match status" value="1"/>
</dbReference>
<dbReference type="FunFam" id="3.30.1400.10:FF:000001">
    <property type="entry name" value="Cell division protein ZipA"/>
    <property type="match status" value="1"/>
</dbReference>
<dbReference type="Gene3D" id="3.30.1400.10">
    <property type="entry name" value="ZipA, C-terminal FtsZ-binding domain"/>
    <property type="match status" value="1"/>
</dbReference>
<dbReference type="HAMAP" id="MF_00509">
    <property type="entry name" value="ZipA"/>
    <property type="match status" value="1"/>
</dbReference>
<dbReference type="InterPro" id="IPR011919">
    <property type="entry name" value="Cell_div_ZipA"/>
</dbReference>
<dbReference type="InterPro" id="IPR007449">
    <property type="entry name" value="ZipA_FtsZ-bd_C"/>
</dbReference>
<dbReference type="InterPro" id="IPR036765">
    <property type="entry name" value="ZipA_FtsZ-bd_C_sf"/>
</dbReference>
<dbReference type="NCBIfam" id="TIGR02205">
    <property type="entry name" value="septum_zipA"/>
    <property type="match status" value="1"/>
</dbReference>
<dbReference type="PANTHER" id="PTHR38685">
    <property type="entry name" value="CELL DIVISION PROTEIN ZIPA"/>
    <property type="match status" value="1"/>
</dbReference>
<dbReference type="PANTHER" id="PTHR38685:SF1">
    <property type="entry name" value="CELL DIVISION PROTEIN ZIPA"/>
    <property type="match status" value="1"/>
</dbReference>
<dbReference type="Pfam" id="PF04354">
    <property type="entry name" value="ZipA_C"/>
    <property type="match status" value="1"/>
</dbReference>
<dbReference type="SMART" id="SM00771">
    <property type="entry name" value="ZipA_C"/>
    <property type="match status" value="1"/>
</dbReference>
<dbReference type="SUPFAM" id="SSF64383">
    <property type="entry name" value="Cell-division protein ZipA, C-terminal domain"/>
    <property type="match status" value="1"/>
</dbReference>
<organism>
    <name type="scientific">Escherichia coli O6:H1 (strain CFT073 / ATCC 700928 / UPEC)</name>
    <dbReference type="NCBI Taxonomy" id="199310"/>
    <lineage>
        <taxon>Bacteria</taxon>
        <taxon>Pseudomonadati</taxon>
        <taxon>Pseudomonadota</taxon>
        <taxon>Gammaproteobacteria</taxon>
        <taxon>Enterobacterales</taxon>
        <taxon>Enterobacteriaceae</taxon>
        <taxon>Escherichia</taxon>
    </lineage>
</organism>